<dbReference type="EMBL" id="AE008923">
    <property type="protein sequence ID" value="AAM36001.1"/>
    <property type="molecule type" value="Genomic_DNA"/>
</dbReference>
<dbReference type="RefSeq" id="WP_002814322.1">
    <property type="nucleotide sequence ID" value="NC_003919.1"/>
</dbReference>
<dbReference type="SMR" id="P63446"/>
<dbReference type="GeneID" id="97509460"/>
<dbReference type="KEGG" id="xac:XAC1128"/>
<dbReference type="eggNOG" id="COG0236">
    <property type="taxonomic scope" value="Bacteria"/>
</dbReference>
<dbReference type="HOGENOM" id="CLU_108696_5_1_6"/>
<dbReference type="UniPathway" id="UPA00094"/>
<dbReference type="Proteomes" id="UP000000576">
    <property type="component" value="Chromosome"/>
</dbReference>
<dbReference type="GO" id="GO:0005829">
    <property type="term" value="C:cytosol"/>
    <property type="evidence" value="ECO:0007669"/>
    <property type="project" value="TreeGrafter"/>
</dbReference>
<dbReference type="GO" id="GO:0016020">
    <property type="term" value="C:membrane"/>
    <property type="evidence" value="ECO:0007669"/>
    <property type="project" value="GOC"/>
</dbReference>
<dbReference type="GO" id="GO:0000035">
    <property type="term" value="F:acyl binding"/>
    <property type="evidence" value="ECO:0007669"/>
    <property type="project" value="TreeGrafter"/>
</dbReference>
<dbReference type="GO" id="GO:0000036">
    <property type="term" value="F:acyl carrier activity"/>
    <property type="evidence" value="ECO:0007669"/>
    <property type="project" value="UniProtKB-UniRule"/>
</dbReference>
<dbReference type="GO" id="GO:0009245">
    <property type="term" value="P:lipid A biosynthetic process"/>
    <property type="evidence" value="ECO:0007669"/>
    <property type="project" value="TreeGrafter"/>
</dbReference>
<dbReference type="FunFam" id="1.10.1200.10:FF:000001">
    <property type="entry name" value="Acyl carrier protein"/>
    <property type="match status" value="1"/>
</dbReference>
<dbReference type="Gene3D" id="1.10.1200.10">
    <property type="entry name" value="ACP-like"/>
    <property type="match status" value="1"/>
</dbReference>
<dbReference type="HAMAP" id="MF_01217">
    <property type="entry name" value="Acyl_carrier"/>
    <property type="match status" value="1"/>
</dbReference>
<dbReference type="InterPro" id="IPR003231">
    <property type="entry name" value="ACP"/>
</dbReference>
<dbReference type="InterPro" id="IPR036736">
    <property type="entry name" value="ACP-like_sf"/>
</dbReference>
<dbReference type="InterPro" id="IPR009081">
    <property type="entry name" value="PP-bd_ACP"/>
</dbReference>
<dbReference type="InterPro" id="IPR006162">
    <property type="entry name" value="Ppantetheine_attach_site"/>
</dbReference>
<dbReference type="NCBIfam" id="TIGR00517">
    <property type="entry name" value="acyl_carrier"/>
    <property type="match status" value="1"/>
</dbReference>
<dbReference type="NCBIfam" id="NF002148">
    <property type="entry name" value="PRK00982.1-2"/>
    <property type="match status" value="1"/>
</dbReference>
<dbReference type="NCBIfam" id="NF002149">
    <property type="entry name" value="PRK00982.1-3"/>
    <property type="match status" value="1"/>
</dbReference>
<dbReference type="NCBIfam" id="NF002150">
    <property type="entry name" value="PRK00982.1-4"/>
    <property type="match status" value="1"/>
</dbReference>
<dbReference type="NCBIfam" id="NF002151">
    <property type="entry name" value="PRK00982.1-5"/>
    <property type="match status" value="1"/>
</dbReference>
<dbReference type="PANTHER" id="PTHR20863">
    <property type="entry name" value="ACYL CARRIER PROTEIN"/>
    <property type="match status" value="1"/>
</dbReference>
<dbReference type="PANTHER" id="PTHR20863:SF76">
    <property type="entry name" value="CARRIER DOMAIN-CONTAINING PROTEIN"/>
    <property type="match status" value="1"/>
</dbReference>
<dbReference type="Pfam" id="PF00550">
    <property type="entry name" value="PP-binding"/>
    <property type="match status" value="1"/>
</dbReference>
<dbReference type="SUPFAM" id="SSF47336">
    <property type="entry name" value="ACP-like"/>
    <property type="match status" value="1"/>
</dbReference>
<dbReference type="PROSITE" id="PS50075">
    <property type="entry name" value="CARRIER"/>
    <property type="match status" value="1"/>
</dbReference>
<dbReference type="PROSITE" id="PS00012">
    <property type="entry name" value="PHOSPHOPANTETHEINE"/>
    <property type="match status" value="1"/>
</dbReference>
<comment type="function">
    <text evidence="2">Carrier of the growing fatty acid chain in fatty acid biosynthesis.</text>
</comment>
<comment type="pathway">
    <text evidence="2">Lipid metabolism; fatty acid biosynthesis.</text>
</comment>
<comment type="subcellular location">
    <subcellularLocation>
        <location evidence="2">Cytoplasm</location>
    </subcellularLocation>
</comment>
<comment type="PTM">
    <text evidence="2">4'-phosphopantetheine is transferred from CoA to a specific serine of apo-ACP by AcpS. This modification is essential for activity because fatty acids are bound in thioester linkage to the sulfhydryl of the prosthetic group.</text>
</comment>
<comment type="similarity">
    <text evidence="2">Belongs to the acyl carrier protein (ACP) family.</text>
</comment>
<protein>
    <recommendedName>
        <fullName evidence="2">Acyl carrier protein</fullName>
        <shortName evidence="2">ACP</shortName>
    </recommendedName>
</protein>
<gene>
    <name evidence="2" type="primary">acpP</name>
    <name type="ordered locus">XAC1128</name>
</gene>
<evidence type="ECO:0000250" key="1"/>
<evidence type="ECO:0000255" key="2">
    <source>
        <dbReference type="HAMAP-Rule" id="MF_01217"/>
    </source>
</evidence>
<evidence type="ECO:0000255" key="3">
    <source>
        <dbReference type="PROSITE-ProRule" id="PRU00258"/>
    </source>
</evidence>
<proteinExistence type="inferred from homology"/>
<organism>
    <name type="scientific">Xanthomonas axonopodis pv. citri (strain 306)</name>
    <dbReference type="NCBI Taxonomy" id="190486"/>
    <lineage>
        <taxon>Bacteria</taxon>
        <taxon>Pseudomonadati</taxon>
        <taxon>Pseudomonadota</taxon>
        <taxon>Gammaproteobacteria</taxon>
        <taxon>Lysobacterales</taxon>
        <taxon>Lysobacteraceae</taxon>
        <taxon>Xanthomonas</taxon>
    </lineage>
</organism>
<sequence length="79" mass="8803">MSTIEERVKKIVVEQLGVKEEEVTTSASFVDDLGADSLDTVELVMALEEEFECEIPDEEAEKITSVQQAIDYVKAHVKS</sequence>
<reference key="1">
    <citation type="journal article" date="2002" name="Nature">
        <title>Comparison of the genomes of two Xanthomonas pathogens with differing host specificities.</title>
        <authorList>
            <person name="da Silva A.C.R."/>
            <person name="Ferro J.A."/>
            <person name="Reinach F.C."/>
            <person name="Farah C.S."/>
            <person name="Furlan L.R."/>
            <person name="Quaggio R.B."/>
            <person name="Monteiro-Vitorello C.B."/>
            <person name="Van Sluys M.A."/>
            <person name="Almeida N.F. Jr."/>
            <person name="Alves L.M.C."/>
            <person name="do Amaral A.M."/>
            <person name="Bertolini M.C."/>
            <person name="Camargo L.E.A."/>
            <person name="Camarotte G."/>
            <person name="Cannavan F."/>
            <person name="Cardozo J."/>
            <person name="Chambergo F."/>
            <person name="Ciapina L.P."/>
            <person name="Cicarelli R.M.B."/>
            <person name="Coutinho L.L."/>
            <person name="Cursino-Santos J.R."/>
            <person name="El-Dorry H."/>
            <person name="Faria J.B."/>
            <person name="Ferreira A.J.S."/>
            <person name="Ferreira R.C.C."/>
            <person name="Ferro M.I.T."/>
            <person name="Formighieri E.F."/>
            <person name="Franco M.C."/>
            <person name="Greggio C.C."/>
            <person name="Gruber A."/>
            <person name="Katsuyama A.M."/>
            <person name="Kishi L.T."/>
            <person name="Leite R.P."/>
            <person name="Lemos E.G.M."/>
            <person name="Lemos M.V.F."/>
            <person name="Locali E.C."/>
            <person name="Machado M.A."/>
            <person name="Madeira A.M.B.N."/>
            <person name="Martinez-Rossi N.M."/>
            <person name="Martins E.C."/>
            <person name="Meidanis J."/>
            <person name="Menck C.F.M."/>
            <person name="Miyaki C.Y."/>
            <person name="Moon D.H."/>
            <person name="Moreira L.M."/>
            <person name="Novo M.T.M."/>
            <person name="Okura V.K."/>
            <person name="Oliveira M.C."/>
            <person name="Oliveira V.R."/>
            <person name="Pereira H.A."/>
            <person name="Rossi A."/>
            <person name="Sena J.A.D."/>
            <person name="Silva C."/>
            <person name="de Souza R.F."/>
            <person name="Spinola L.A.F."/>
            <person name="Takita M.A."/>
            <person name="Tamura R.E."/>
            <person name="Teixeira E.C."/>
            <person name="Tezza R.I.D."/>
            <person name="Trindade dos Santos M."/>
            <person name="Truffi D."/>
            <person name="Tsai S.M."/>
            <person name="White F.F."/>
            <person name="Setubal J.C."/>
            <person name="Kitajima J.P."/>
        </authorList>
    </citation>
    <scope>NUCLEOTIDE SEQUENCE [LARGE SCALE GENOMIC DNA]</scope>
    <source>
        <strain>306</strain>
    </source>
</reference>
<keyword id="KW-0963">Cytoplasm</keyword>
<keyword id="KW-0275">Fatty acid biosynthesis</keyword>
<keyword id="KW-0276">Fatty acid metabolism</keyword>
<keyword id="KW-0444">Lipid biosynthesis</keyword>
<keyword id="KW-0443">Lipid metabolism</keyword>
<keyword id="KW-0596">Phosphopantetheine</keyword>
<keyword id="KW-0597">Phosphoprotein</keyword>
<name>ACP_XANAC</name>
<feature type="initiator methionine" description="Removed" evidence="1">
    <location>
        <position position="1"/>
    </location>
</feature>
<feature type="chain" id="PRO_0000180222" description="Acyl carrier protein">
    <location>
        <begin position="2"/>
        <end position="79"/>
    </location>
</feature>
<feature type="domain" description="Carrier" evidence="3">
    <location>
        <begin position="2"/>
        <end position="77"/>
    </location>
</feature>
<feature type="modified residue" description="O-(pantetheine 4'-phosphoryl)serine" evidence="3">
    <location>
        <position position="37"/>
    </location>
</feature>
<accession>P63446</accession>
<accession>P58986</accession>